<comment type="function">
    <text evidence="2">Transcription activator. Together with BRN1 and SMB, regulates cellular maturation of root cap. Promotes the expression of genes involved in secondary cell walls (SCW) biosynthesis.</text>
</comment>
<comment type="subcellular location">
    <subcellularLocation>
        <location evidence="3">Nucleus</location>
    </subcellularLocation>
</comment>
<comment type="tissue specificity">
    <text evidence="2">Expressed throughout the root cap, in both columella (COL) and lateral root cap (LRC) cells, with higher levels in the COL-adjoining LRC than the upper LRC. Also present at low levels expression in the tips of cotyledons and the cotyledon vasculature, as weel as in vasculature of the first pair of true leaves and at the hydathodes.</text>
</comment>
<comment type="developmental stage">
    <text evidence="2">Detectable in lateral root development when they reach 10 mm long.</text>
</comment>
<comment type="domain">
    <text>The NAC domain includes a DNA-binding domain and a dimerization domain.</text>
</comment>
<accession>Q9SV87</accession>
<evidence type="ECO:0000255" key="1">
    <source>
        <dbReference type="PROSITE-ProRule" id="PRU00353"/>
    </source>
</evidence>
<evidence type="ECO:0000269" key="2">
    <source>
    </source>
</evidence>
<evidence type="ECO:0000305" key="3"/>
<protein>
    <recommendedName>
        <fullName>Protein BEARSKIN2</fullName>
    </recommendedName>
    <alternativeName>
        <fullName>NAC domain-containing protein 70</fullName>
        <shortName>ANAC070</shortName>
    </alternativeName>
</protein>
<feature type="chain" id="PRO_0000394193" description="Protein BEARSKIN2">
    <location>
        <begin position="1"/>
        <end position="341"/>
    </location>
</feature>
<feature type="domain" description="NAC" evidence="1">
    <location>
        <begin position="9"/>
        <end position="160"/>
    </location>
</feature>
<feature type="DNA-binding region" evidence="1">
    <location>
        <begin position="109"/>
        <end position="166"/>
    </location>
</feature>
<proteinExistence type="evidence at transcript level"/>
<keyword id="KW-0010">Activator</keyword>
<keyword id="KW-0217">Developmental protein</keyword>
<keyword id="KW-0238">DNA-binding</keyword>
<keyword id="KW-0539">Nucleus</keyword>
<keyword id="KW-1185">Reference proteome</keyword>
<keyword id="KW-0804">Transcription</keyword>
<keyword id="KW-0805">Transcription regulation</keyword>
<name>BRN2_ARATH</name>
<sequence length="341" mass="38946">MGSSSNGGVPPGFRFHPTDEELLHYYLKKKISYQKFEMEVIREVDLNKLEPWDLQERCKIGSTPQNEWYFFSHKDRKYPTGSRTNRATHAGFWKATGRDKCIRNSYKKIGMRKTLVFYKGRAPHGQKTDWIMHEYRLEDADDPQANPSEDGWVVCRVFMKKNLFKVVNEGSSSINSLDQHNHDASNNNHALQARSFMHRDSPYQLVRNHGAMTFELNKPDLALHQYPPIFHKPPSLGFDYSSGLARDSESAASEGLQYQQACEPGLDVGTCETVASHNHQQGLGEWAMMDRLVTCHMGNEDSSRGITYEDGNNNSSSVVQPVPATNQLTLRSEMDFWGYSK</sequence>
<reference key="1">
    <citation type="journal article" date="1999" name="Nature">
        <title>Sequence and analysis of chromosome 4 of the plant Arabidopsis thaliana.</title>
        <authorList>
            <person name="Mayer K.F.X."/>
            <person name="Schueller C."/>
            <person name="Wambutt R."/>
            <person name="Murphy G."/>
            <person name="Volckaert G."/>
            <person name="Pohl T."/>
            <person name="Duesterhoeft A."/>
            <person name="Stiekema W."/>
            <person name="Entian K.-D."/>
            <person name="Terryn N."/>
            <person name="Harris B."/>
            <person name="Ansorge W."/>
            <person name="Brandt P."/>
            <person name="Grivell L.A."/>
            <person name="Rieger M."/>
            <person name="Weichselgartner M."/>
            <person name="de Simone V."/>
            <person name="Obermaier B."/>
            <person name="Mache R."/>
            <person name="Mueller M."/>
            <person name="Kreis M."/>
            <person name="Delseny M."/>
            <person name="Puigdomenech P."/>
            <person name="Watson M."/>
            <person name="Schmidtheini T."/>
            <person name="Reichert B."/>
            <person name="Portetelle D."/>
            <person name="Perez-Alonso M."/>
            <person name="Boutry M."/>
            <person name="Bancroft I."/>
            <person name="Vos P."/>
            <person name="Hoheisel J."/>
            <person name="Zimmermann W."/>
            <person name="Wedler H."/>
            <person name="Ridley P."/>
            <person name="Langham S.-A."/>
            <person name="McCullagh B."/>
            <person name="Bilham L."/>
            <person name="Robben J."/>
            <person name="van der Schueren J."/>
            <person name="Grymonprez B."/>
            <person name="Chuang Y.-J."/>
            <person name="Vandenbussche F."/>
            <person name="Braeken M."/>
            <person name="Weltjens I."/>
            <person name="Voet M."/>
            <person name="Bastiaens I."/>
            <person name="Aert R."/>
            <person name="Defoor E."/>
            <person name="Weitzenegger T."/>
            <person name="Bothe G."/>
            <person name="Ramsperger U."/>
            <person name="Hilbert H."/>
            <person name="Braun M."/>
            <person name="Holzer E."/>
            <person name="Brandt A."/>
            <person name="Peters S."/>
            <person name="van Staveren M."/>
            <person name="Dirkse W."/>
            <person name="Mooijman P."/>
            <person name="Klein Lankhorst R."/>
            <person name="Rose M."/>
            <person name="Hauf J."/>
            <person name="Koetter P."/>
            <person name="Berneiser S."/>
            <person name="Hempel S."/>
            <person name="Feldpausch M."/>
            <person name="Lamberth S."/>
            <person name="Van den Daele H."/>
            <person name="De Keyser A."/>
            <person name="Buysshaert C."/>
            <person name="Gielen J."/>
            <person name="Villarroel R."/>
            <person name="De Clercq R."/>
            <person name="van Montagu M."/>
            <person name="Rogers J."/>
            <person name="Cronin A."/>
            <person name="Quail M.A."/>
            <person name="Bray-Allen S."/>
            <person name="Clark L."/>
            <person name="Doggett J."/>
            <person name="Hall S."/>
            <person name="Kay M."/>
            <person name="Lennard N."/>
            <person name="McLay K."/>
            <person name="Mayes R."/>
            <person name="Pettett A."/>
            <person name="Rajandream M.A."/>
            <person name="Lyne M."/>
            <person name="Benes V."/>
            <person name="Rechmann S."/>
            <person name="Borkova D."/>
            <person name="Bloecker H."/>
            <person name="Scharfe M."/>
            <person name="Grimm M."/>
            <person name="Loehnert T.-H."/>
            <person name="Dose S."/>
            <person name="de Haan M."/>
            <person name="Maarse A.C."/>
            <person name="Schaefer M."/>
            <person name="Mueller-Auer S."/>
            <person name="Gabel C."/>
            <person name="Fuchs M."/>
            <person name="Fartmann B."/>
            <person name="Granderath K."/>
            <person name="Dauner D."/>
            <person name="Herzl A."/>
            <person name="Neumann S."/>
            <person name="Argiriou A."/>
            <person name="Vitale D."/>
            <person name="Liguori R."/>
            <person name="Piravandi E."/>
            <person name="Massenet O."/>
            <person name="Quigley F."/>
            <person name="Clabauld G."/>
            <person name="Muendlein A."/>
            <person name="Felber R."/>
            <person name="Schnabl S."/>
            <person name="Hiller R."/>
            <person name="Schmidt W."/>
            <person name="Lecharny A."/>
            <person name="Aubourg S."/>
            <person name="Chefdor F."/>
            <person name="Cooke R."/>
            <person name="Berger C."/>
            <person name="Monfort A."/>
            <person name="Casacuberta E."/>
            <person name="Gibbons T."/>
            <person name="Weber N."/>
            <person name="Vandenbol M."/>
            <person name="Bargues M."/>
            <person name="Terol J."/>
            <person name="Torres A."/>
            <person name="Perez-Perez A."/>
            <person name="Purnelle B."/>
            <person name="Bent E."/>
            <person name="Johnson S."/>
            <person name="Tacon D."/>
            <person name="Jesse T."/>
            <person name="Heijnen L."/>
            <person name="Schwarz S."/>
            <person name="Scholler P."/>
            <person name="Heber S."/>
            <person name="Francs P."/>
            <person name="Bielke C."/>
            <person name="Frishman D."/>
            <person name="Haase D."/>
            <person name="Lemcke K."/>
            <person name="Mewes H.-W."/>
            <person name="Stocker S."/>
            <person name="Zaccaria P."/>
            <person name="Bevan M."/>
            <person name="Wilson R.K."/>
            <person name="de la Bastide M."/>
            <person name="Habermann K."/>
            <person name="Parnell L."/>
            <person name="Dedhia N."/>
            <person name="Gnoj L."/>
            <person name="Schutz K."/>
            <person name="Huang E."/>
            <person name="Spiegel L."/>
            <person name="Sekhon M."/>
            <person name="Murray J."/>
            <person name="Sheet P."/>
            <person name="Cordes M."/>
            <person name="Abu-Threideh J."/>
            <person name="Stoneking T."/>
            <person name="Kalicki J."/>
            <person name="Graves T."/>
            <person name="Harmon G."/>
            <person name="Edwards J."/>
            <person name="Latreille P."/>
            <person name="Courtney L."/>
            <person name="Cloud J."/>
            <person name="Abbott A."/>
            <person name="Scott K."/>
            <person name="Johnson D."/>
            <person name="Minx P."/>
            <person name="Bentley D."/>
            <person name="Fulton B."/>
            <person name="Miller N."/>
            <person name="Greco T."/>
            <person name="Kemp K."/>
            <person name="Kramer J."/>
            <person name="Fulton L."/>
            <person name="Mardis E."/>
            <person name="Dante M."/>
            <person name="Pepin K."/>
            <person name="Hillier L.W."/>
            <person name="Nelson J."/>
            <person name="Spieth J."/>
            <person name="Ryan E."/>
            <person name="Andrews S."/>
            <person name="Geisel C."/>
            <person name="Layman D."/>
            <person name="Du H."/>
            <person name="Ali J."/>
            <person name="Berghoff A."/>
            <person name="Jones K."/>
            <person name="Drone K."/>
            <person name="Cotton M."/>
            <person name="Joshu C."/>
            <person name="Antonoiu B."/>
            <person name="Zidanic M."/>
            <person name="Strong C."/>
            <person name="Sun H."/>
            <person name="Lamar B."/>
            <person name="Yordan C."/>
            <person name="Ma P."/>
            <person name="Zhong J."/>
            <person name="Preston R."/>
            <person name="Vil D."/>
            <person name="Shekher M."/>
            <person name="Matero A."/>
            <person name="Shah R."/>
            <person name="Swaby I.K."/>
            <person name="O'Shaughnessy A."/>
            <person name="Rodriguez M."/>
            <person name="Hoffman J."/>
            <person name="Till S."/>
            <person name="Granat S."/>
            <person name="Shohdy N."/>
            <person name="Hasegawa A."/>
            <person name="Hameed A."/>
            <person name="Lodhi M."/>
            <person name="Johnson A."/>
            <person name="Chen E."/>
            <person name="Marra M.A."/>
            <person name="Martienssen R."/>
            <person name="McCombie W.R."/>
        </authorList>
    </citation>
    <scope>NUCLEOTIDE SEQUENCE [LARGE SCALE GENOMIC DNA]</scope>
    <source>
        <strain>cv. Columbia</strain>
    </source>
</reference>
<reference key="2">
    <citation type="journal article" date="2017" name="Plant J.">
        <title>Araport11: a complete reannotation of the Arabidopsis thaliana reference genome.</title>
        <authorList>
            <person name="Cheng C.Y."/>
            <person name="Krishnakumar V."/>
            <person name="Chan A.P."/>
            <person name="Thibaud-Nissen F."/>
            <person name="Schobel S."/>
            <person name="Town C.D."/>
        </authorList>
    </citation>
    <scope>GENOME REANNOTATION</scope>
    <source>
        <strain>cv. Columbia</strain>
    </source>
</reference>
<reference key="3">
    <citation type="journal article" date="2003" name="Science">
        <title>Empirical analysis of transcriptional activity in the Arabidopsis genome.</title>
        <authorList>
            <person name="Yamada K."/>
            <person name="Lim J."/>
            <person name="Dale J.M."/>
            <person name="Chen H."/>
            <person name="Shinn P."/>
            <person name="Palm C.J."/>
            <person name="Southwick A.M."/>
            <person name="Wu H.C."/>
            <person name="Kim C.J."/>
            <person name="Nguyen M."/>
            <person name="Pham P.K."/>
            <person name="Cheuk R.F."/>
            <person name="Karlin-Newmann G."/>
            <person name="Liu S.X."/>
            <person name="Lam B."/>
            <person name="Sakano H."/>
            <person name="Wu T."/>
            <person name="Yu G."/>
            <person name="Miranda M."/>
            <person name="Quach H.L."/>
            <person name="Tripp M."/>
            <person name="Chang C.H."/>
            <person name="Lee J.M."/>
            <person name="Toriumi M.J."/>
            <person name="Chan M.M."/>
            <person name="Tang C.C."/>
            <person name="Onodera C.S."/>
            <person name="Deng J.M."/>
            <person name="Akiyama K."/>
            <person name="Ansari Y."/>
            <person name="Arakawa T."/>
            <person name="Banh J."/>
            <person name="Banno F."/>
            <person name="Bowser L."/>
            <person name="Brooks S.Y."/>
            <person name="Carninci P."/>
            <person name="Chao Q."/>
            <person name="Choy N."/>
            <person name="Enju A."/>
            <person name="Goldsmith A.D."/>
            <person name="Gurjal M."/>
            <person name="Hansen N.F."/>
            <person name="Hayashizaki Y."/>
            <person name="Johnson-Hopson C."/>
            <person name="Hsuan V.W."/>
            <person name="Iida K."/>
            <person name="Karnes M."/>
            <person name="Khan S."/>
            <person name="Koesema E."/>
            <person name="Ishida J."/>
            <person name="Jiang P.X."/>
            <person name="Jones T."/>
            <person name="Kawai J."/>
            <person name="Kamiya A."/>
            <person name="Meyers C."/>
            <person name="Nakajima M."/>
            <person name="Narusaka M."/>
            <person name="Seki M."/>
            <person name="Sakurai T."/>
            <person name="Satou M."/>
            <person name="Tamse R."/>
            <person name="Vaysberg M."/>
            <person name="Wallender E.K."/>
            <person name="Wong C."/>
            <person name="Yamamura Y."/>
            <person name="Yuan S."/>
            <person name="Shinozaki K."/>
            <person name="Davis R.W."/>
            <person name="Theologis A."/>
            <person name="Ecker J.R."/>
        </authorList>
    </citation>
    <scope>NUCLEOTIDE SEQUENCE [LARGE SCALE MRNA]</scope>
    <source>
        <strain>cv. Columbia</strain>
    </source>
</reference>
<reference key="4">
    <citation type="journal article" date="2003" name="DNA Res.">
        <title>Comprehensive analysis of NAC family genes in Oryza sativa and Arabidopsis thaliana.</title>
        <authorList>
            <person name="Ooka H."/>
            <person name="Satoh K."/>
            <person name="Doi K."/>
            <person name="Nagata T."/>
            <person name="Otomo Y."/>
            <person name="Murakami K."/>
            <person name="Matsubara K."/>
            <person name="Osato N."/>
            <person name="Kawai J."/>
            <person name="Carninci P."/>
            <person name="Hayashizaki Y."/>
            <person name="Suzuki K."/>
            <person name="Kojima K."/>
            <person name="Takahara Y."/>
            <person name="Yamamoto K."/>
            <person name="Kikuchi S."/>
        </authorList>
    </citation>
    <scope>GENE FAMILY</scope>
    <scope>NOMENCLATURE</scope>
</reference>
<reference key="5">
    <citation type="journal article" date="2010" name="Plant Cell">
        <title>SOMBRERO, BEARSKIN1, and BEARSKIN2 regulate root cap maturation in Arabidopsis.</title>
        <authorList>
            <person name="Bennett T."/>
            <person name="van den Toorn A."/>
            <person name="Sanchez-Perez G.F."/>
            <person name="Campilho A."/>
            <person name="Willemsen V."/>
            <person name="Snel B."/>
            <person name="Scheres B."/>
        </authorList>
    </citation>
    <scope>FUNCTION</scope>
    <scope>TISSUE SPECIFICITY</scope>
    <scope>DEVELOPMENTAL STAGE</scope>
</reference>
<organism>
    <name type="scientific">Arabidopsis thaliana</name>
    <name type="common">Mouse-ear cress</name>
    <dbReference type="NCBI Taxonomy" id="3702"/>
    <lineage>
        <taxon>Eukaryota</taxon>
        <taxon>Viridiplantae</taxon>
        <taxon>Streptophyta</taxon>
        <taxon>Embryophyta</taxon>
        <taxon>Tracheophyta</taxon>
        <taxon>Spermatophyta</taxon>
        <taxon>Magnoliopsida</taxon>
        <taxon>eudicotyledons</taxon>
        <taxon>Gunneridae</taxon>
        <taxon>Pentapetalae</taxon>
        <taxon>rosids</taxon>
        <taxon>malvids</taxon>
        <taxon>Brassicales</taxon>
        <taxon>Brassicaceae</taxon>
        <taxon>Camelineae</taxon>
        <taxon>Arabidopsis</taxon>
    </lineage>
</organism>
<dbReference type="EMBL" id="AL049488">
    <property type="protein sequence ID" value="CAB39788.1"/>
    <property type="molecule type" value="Genomic_DNA"/>
</dbReference>
<dbReference type="EMBL" id="AL161517">
    <property type="protein sequence ID" value="CAB78158.1"/>
    <property type="molecule type" value="Genomic_DNA"/>
</dbReference>
<dbReference type="EMBL" id="CP002687">
    <property type="protein sequence ID" value="AEE82870.1"/>
    <property type="molecule type" value="Genomic_DNA"/>
</dbReference>
<dbReference type="EMBL" id="AY133681">
    <property type="protein sequence ID" value="AAM91615.1"/>
    <property type="molecule type" value="mRNA"/>
</dbReference>
<dbReference type="PIR" id="T04050">
    <property type="entry name" value="T04050"/>
</dbReference>
<dbReference type="RefSeq" id="NP_192773.1">
    <property type="nucleotide sequence ID" value="NM_117103.3"/>
</dbReference>
<dbReference type="SMR" id="Q9SV87"/>
<dbReference type="STRING" id="3702.Q9SV87"/>
<dbReference type="PaxDb" id="3702-AT4G10350.1"/>
<dbReference type="DNASU" id="826627"/>
<dbReference type="EnsemblPlants" id="AT4G10350.1">
    <property type="protein sequence ID" value="AT4G10350.1"/>
    <property type="gene ID" value="AT4G10350"/>
</dbReference>
<dbReference type="GeneID" id="826627"/>
<dbReference type="Gramene" id="AT4G10350.1">
    <property type="protein sequence ID" value="AT4G10350.1"/>
    <property type="gene ID" value="AT4G10350"/>
</dbReference>
<dbReference type="KEGG" id="ath:AT4G10350"/>
<dbReference type="Araport" id="AT4G10350"/>
<dbReference type="TAIR" id="AT4G10350">
    <property type="gene designation" value="NAC070"/>
</dbReference>
<dbReference type="eggNOG" id="ENOG502R8AM">
    <property type="taxonomic scope" value="Eukaryota"/>
</dbReference>
<dbReference type="HOGENOM" id="CLU_035664_1_3_1"/>
<dbReference type="InParanoid" id="Q9SV87"/>
<dbReference type="OMA" id="IEVGSCE"/>
<dbReference type="OrthoDB" id="772776at2759"/>
<dbReference type="PhylomeDB" id="Q9SV87"/>
<dbReference type="PRO" id="PR:Q9SV87"/>
<dbReference type="Proteomes" id="UP000006548">
    <property type="component" value="Chromosome 4"/>
</dbReference>
<dbReference type="ExpressionAtlas" id="Q9SV87">
    <property type="expression patterns" value="baseline and differential"/>
</dbReference>
<dbReference type="GO" id="GO:0005634">
    <property type="term" value="C:nucleus"/>
    <property type="evidence" value="ECO:0007669"/>
    <property type="project" value="UniProtKB-SubCell"/>
</dbReference>
<dbReference type="GO" id="GO:0003677">
    <property type="term" value="F:DNA binding"/>
    <property type="evidence" value="ECO:0007669"/>
    <property type="project" value="UniProtKB-KW"/>
</dbReference>
<dbReference type="GO" id="GO:0003700">
    <property type="term" value="F:DNA-binding transcription factor activity"/>
    <property type="evidence" value="ECO:0000250"/>
    <property type="project" value="TAIR"/>
</dbReference>
<dbReference type="GO" id="GO:0009834">
    <property type="term" value="P:plant-type secondary cell wall biogenesis"/>
    <property type="evidence" value="ECO:0000315"/>
    <property type="project" value="UniProtKB"/>
</dbReference>
<dbReference type="GO" id="GO:0045893">
    <property type="term" value="P:positive regulation of DNA-templated transcription"/>
    <property type="evidence" value="ECO:0000315"/>
    <property type="project" value="UniProtKB"/>
</dbReference>
<dbReference type="GO" id="GO:0010628">
    <property type="term" value="P:positive regulation of gene expression"/>
    <property type="evidence" value="ECO:0000270"/>
    <property type="project" value="TAIR"/>
</dbReference>
<dbReference type="GO" id="GO:0048829">
    <property type="term" value="P:root cap development"/>
    <property type="evidence" value="ECO:0000315"/>
    <property type="project" value="UniProtKB"/>
</dbReference>
<dbReference type="FunFam" id="2.170.150.80:FF:000003">
    <property type="entry name" value="NAC domain-containing protein"/>
    <property type="match status" value="1"/>
</dbReference>
<dbReference type="Gene3D" id="2.170.150.80">
    <property type="entry name" value="NAC domain"/>
    <property type="match status" value="1"/>
</dbReference>
<dbReference type="InterPro" id="IPR003441">
    <property type="entry name" value="NAC-dom"/>
</dbReference>
<dbReference type="InterPro" id="IPR036093">
    <property type="entry name" value="NAC_dom_sf"/>
</dbReference>
<dbReference type="PANTHER" id="PTHR31744">
    <property type="entry name" value="PROTEIN CUP-SHAPED COTYLEDON 2-RELATED"/>
    <property type="match status" value="1"/>
</dbReference>
<dbReference type="PANTHER" id="PTHR31744:SF212">
    <property type="entry name" value="PROTEIN SOMBRERO-LIKE ISOFORM X2"/>
    <property type="match status" value="1"/>
</dbReference>
<dbReference type="Pfam" id="PF02365">
    <property type="entry name" value="NAM"/>
    <property type="match status" value="1"/>
</dbReference>
<dbReference type="SUPFAM" id="SSF101941">
    <property type="entry name" value="NAC domain"/>
    <property type="match status" value="1"/>
</dbReference>
<dbReference type="PROSITE" id="PS51005">
    <property type="entry name" value="NAC"/>
    <property type="match status" value="1"/>
</dbReference>
<gene>
    <name type="primary">BRN2</name>
    <name type="synonym">NAC070</name>
    <name type="ordered locus">At4g10350</name>
    <name type="ORF">F24G24.150</name>
</gene>